<keyword id="KW-1185">Reference proteome</keyword>
<evidence type="ECO:0000305" key="1"/>
<accession>P68208</accession>
<accession>P32691</accession>
<name>YJBJ_SHIFL</name>
<gene>
    <name type="primary">yjbJ</name>
    <name type="ordered locus">SF4160</name>
    <name type="ordered locus">S3571</name>
</gene>
<organism>
    <name type="scientific">Shigella flexneri</name>
    <dbReference type="NCBI Taxonomy" id="623"/>
    <lineage>
        <taxon>Bacteria</taxon>
        <taxon>Pseudomonadati</taxon>
        <taxon>Pseudomonadota</taxon>
        <taxon>Gammaproteobacteria</taxon>
        <taxon>Enterobacterales</taxon>
        <taxon>Enterobacteriaceae</taxon>
        <taxon>Shigella</taxon>
    </lineage>
</organism>
<reference key="1">
    <citation type="journal article" date="2002" name="Nucleic Acids Res.">
        <title>Genome sequence of Shigella flexneri 2a: insights into pathogenicity through comparison with genomes of Escherichia coli K12 and O157.</title>
        <authorList>
            <person name="Jin Q."/>
            <person name="Yuan Z."/>
            <person name="Xu J."/>
            <person name="Wang Y."/>
            <person name="Shen Y."/>
            <person name="Lu W."/>
            <person name="Wang J."/>
            <person name="Liu H."/>
            <person name="Yang J."/>
            <person name="Yang F."/>
            <person name="Zhang X."/>
            <person name="Zhang J."/>
            <person name="Yang G."/>
            <person name="Wu H."/>
            <person name="Qu D."/>
            <person name="Dong J."/>
            <person name="Sun L."/>
            <person name="Xue Y."/>
            <person name="Zhao A."/>
            <person name="Gao Y."/>
            <person name="Zhu J."/>
            <person name="Kan B."/>
            <person name="Ding K."/>
            <person name="Chen S."/>
            <person name="Cheng H."/>
            <person name="Yao Z."/>
            <person name="He B."/>
            <person name="Chen R."/>
            <person name="Ma D."/>
            <person name="Qiang B."/>
            <person name="Wen Y."/>
            <person name="Hou Y."/>
            <person name="Yu J."/>
        </authorList>
    </citation>
    <scope>NUCLEOTIDE SEQUENCE [LARGE SCALE GENOMIC DNA]</scope>
    <source>
        <strain>301 / Serotype 2a</strain>
    </source>
</reference>
<reference key="2">
    <citation type="journal article" date="2003" name="Infect. Immun.">
        <title>Complete genome sequence and comparative genomics of Shigella flexneri serotype 2a strain 2457T.</title>
        <authorList>
            <person name="Wei J."/>
            <person name="Goldberg M.B."/>
            <person name="Burland V."/>
            <person name="Venkatesan M.M."/>
            <person name="Deng W."/>
            <person name="Fournier G."/>
            <person name="Mayhew G.F."/>
            <person name="Plunkett G. III"/>
            <person name="Rose D.J."/>
            <person name="Darling A."/>
            <person name="Mau B."/>
            <person name="Perna N.T."/>
            <person name="Payne S.M."/>
            <person name="Runyen-Janecky L.J."/>
            <person name="Zhou S."/>
            <person name="Schwartz D.C."/>
            <person name="Blattner F.R."/>
        </authorList>
    </citation>
    <scope>NUCLEOTIDE SEQUENCE [LARGE SCALE GENOMIC DNA]</scope>
    <source>
        <strain>ATCC 700930 / 2457T / Serotype 2a</strain>
    </source>
</reference>
<protein>
    <recommendedName>
        <fullName>UPF0337 protein YjbJ</fullName>
    </recommendedName>
</protein>
<sequence length="69" mass="8325">MNKDEAGGNWKQFKGKVKEQWGKLTDDDMTIIEGKRDQLVGKIQERYGYQKDQAEKEVVDWETRNEYRW</sequence>
<dbReference type="EMBL" id="AE005674">
    <property type="protein sequence ID" value="AAN45582.2"/>
    <property type="molecule type" value="Genomic_DNA"/>
</dbReference>
<dbReference type="EMBL" id="AE014073">
    <property type="protein sequence ID" value="AAP18617.1"/>
    <property type="molecule type" value="Genomic_DNA"/>
</dbReference>
<dbReference type="RefSeq" id="NP_709875.2">
    <property type="nucleotide sequence ID" value="NC_004337.2"/>
</dbReference>
<dbReference type="RefSeq" id="WP_001030593.1">
    <property type="nucleotide sequence ID" value="NZ_WPGW01000150.1"/>
</dbReference>
<dbReference type="BMRB" id="P68208"/>
<dbReference type="SMR" id="P68208"/>
<dbReference type="STRING" id="198214.SF4160"/>
<dbReference type="PaxDb" id="198214-SF4160"/>
<dbReference type="GeneID" id="1025480"/>
<dbReference type="KEGG" id="sfl:SF4160"/>
<dbReference type="KEGG" id="sfx:S3571"/>
<dbReference type="PATRIC" id="fig|198214.7.peg.4908"/>
<dbReference type="HOGENOM" id="CLU_135567_4_1_6"/>
<dbReference type="Proteomes" id="UP000001006">
    <property type="component" value="Chromosome"/>
</dbReference>
<dbReference type="Proteomes" id="UP000002673">
    <property type="component" value="Chromosome"/>
</dbReference>
<dbReference type="FunFam" id="1.10.1470.10:FF:000001">
    <property type="entry name" value="CsbD family protein"/>
    <property type="match status" value="1"/>
</dbReference>
<dbReference type="Gene3D" id="1.10.1470.10">
    <property type="entry name" value="YjbJ"/>
    <property type="match status" value="1"/>
</dbReference>
<dbReference type="InterPro" id="IPR008462">
    <property type="entry name" value="CsbD"/>
</dbReference>
<dbReference type="InterPro" id="IPR050423">
    <property type="entry name" value="UPF0337_stress_rsp"/>
</dbReference>
<dbReference type="InterPro" id="IPR026042">
    <property type="entry name" value="YjbJ"/>
</dbReference>
<dbReference type="InterPro" id="IPR036629">
    <property type="entry name" value="YjbJ_sf"/>
</dbReference>
<dbReference type="NCBIfam" id="NF007748">
    <property type="entry name" value="PRK10428.1"/>
    <property type="match status" value="1"/>
</dbReference>
<dbReference type="PANTHER" id="PTHR34977">
    <property type="entry name" value="UPF0337 PROTEIN YJBJ"/>
    <property type="match status" value="1"/>
</dbReference>
<dbReference type="PANTHER" id="PTHR34977:SF1">
    <property type="entry name" value="UPF0337 PROTEIN YJBJ"/>
    <property type="match status" value="1"/>
</dbReference>
<dbReference type="Pfam" id="PF05532">
    <property type="entry name" value="CsbD"/>
    <property type="match status" value="1"/>
</dbReference>
<dbReference type="PIRSF" id="PIRSF039008">
    <property type="entry name" value="YjbJ"/>
    <property type="match status" value="1"/>
</dbReference>
<dbReference type="SUPFAM" id="SSF69047">
    <property type="entry name" value="Hypothetical protein YjbJ"/>
    <property type="match status" value="1"/>
</dbReference>
<comment type="similarity">
    <text evidence="1">Belongs to the UPF0337 (CsbD) family.</text>
</comment>
<feature type="chain" id="PRO_0000210031" description="UPF0337 protein YjbJ">
    <location>
        <begin position="1"/>
        <end position="69"/>
    </location>
</feature>
<proteinExistence type="inferred from homology"/>